<dbReference type="EMBL" id="CP000950">
    <property type="protein sequence ID" value="ACA67590.1"/>
    <property type="molecule type" value="Genomic_DNA"/>
</dbReference>
<dbReference type="RefSeq" id="WP_012303849.1">
    <property type="nucleotide sequence ID" value="NZ_CP009792.1"/>
</dbReference>
<dbReference type="SMR" id="B1JS04"/>
<dbReference type="KEGG" id="ypy:YPK_1292"/>
<dbReference type="PATRIC" id="fig|502800.11.peg.1927"/>
<dbReference type="GO" id="GO:0005886">
    <property type="term" value="C:plasma membrane"/>
    <property type="evidence" value="ECO:0007669"/>
    <property type="project" value="UniProtKB-SubCell"/>
</dbReference>
<dbReference type="GO" id="GO:0003677">
    <property type="term" value="F:DNA binding"/>
    <property type="evidence" value="ECO:0007669"/>
    <property type="project" value="UniProtKB-KW"/>
</dbReference>
<dbReference type="GO" id="GO:0008360">
    <property type="term" value="P:regulation of cell shape"/>
    <property type="evidence" value="ECO:0007669"/>
    <property type="project" value="UniProtKB-UniRule"/>
</dbReference>
<dbReference type="CDD" id="cd00093">
    <property type="entry name" value="HTH_XRE"/>
    <property type="match status" value="1"/>
</dbReference>
<dbReference type="Gene3D" id="1.10.260.40">
    <property type="entry name" value="lambda repressor-like DNA-binding domains"/>
    <property type="match status" value="1"/>
</dbReference>
<dbReference type="HAMAP" id="MF_02017">
    <property type="entry name" value="RodZ"/>
    <property type="match status" value="1"/>
</dbReference>
<dbReference type="InterPro" id="IPR050400">
    <property type="entry name" value="Bact_Cytoskel_RodZ"/>
</dbReference>
<dbReference type="InterPro" id="IPR001387">
    <property type="entry name" value="Cro/C1-type_HTH"/>
</dbReference>
<dbReference type="InterPro" id="IPR010982">
    <property type="entry name" value="Lambda_DNA-bd_dom_sf"/>
</dbReference>
<dbReference type="InterPro" id="IPR023690">
    <property type="entry name" value="RodZ"/>
</dbReference>
<dbReference type="InterPro" id="IPR025194">
    <property type="entry name" value="RodZ-like_C"/>
</dbReference>
<dbReference type="NCBIfam" id="NF008109">
    <property type="entry name" value="PRK10856.1"/>
    <property type="match status" value="1"/>
</dbReference>
<dbReference type="PANTHER" id="PTHR34475">
    <property type="match status" value="1"/>
</dbReference>
<dbReference type="PANTHER" id="PTHR34475:SF1">
    <property type="entry name" value="CYTOSKELETON PROTEIN RODZ"/>
    <property type="match status" value="1"/>
</dbReference>
<dbReference type="Pfam" id="PF13413">
    <property type="entry name" value="HTH_25"/>
    <property type="match status" value="1"/>
</dbReference>
<dbReference type="Pfam" id="PF13464">
    <property type="entry name" value="RodZ_C"/>
    <property type="match status" value="1"/>
</dbReference>
<dbReference type="SMART" id="SM00530">
    <property type="entry name" value="HTH_XRE"/>
    <property type="match status" value="1"/>
</dbReference>
<dbReference type="SUPFAM" id="SSF47413">
    <property type="entry name" value="lambda repressor-like DNA-binding domains"/>
    <property type="match status" value="1"/>
</dbReference>
<dbReference type="PROSITE" id="PS50943">
    <property type="entry name" value="HTH_CROC1"/>
    <property type="match status" value="1"/>
</dbReference>
<comment type="function">
    <text evidence="1">Cytoskeletal protein that is involved in cell-shape control through regulation of the length of the long axis.</text>
</comment>
<comment type="subcellular location">
    <subcellularLocation>
        <location evidence="1">Cell inner membrane</location>
        <topology evidence="1">Single-pass type II membrane protein</topology>
    </subcellularLocation>
    <text evidence="1">Forms helical filaments along the long axis of the cell.</text>
</comment>
<comment type="domain">
    <text evidence="1">The helix-turn-helix (HTH) motif in the cytoplasmic domain of the N-terminus is involved in the formation of spirals to maintain the rigid rod shape. As this protein is anchored in the cytoplasmic membrane, the HTH motif may contribute to protein-protein interactions to form the RodZ helix, which is localized beneath the cytoplasmic membrane. The C-terminal domain may be critical for determination of the rod shape by probably interacting with enzymes required for synthesis of the peptidoglycan layer, including PBPs in the periplasm.</text>
</comment>
<comment type="similarity">
    <text evidence="1">Belongs to the RodZ family.</text>
</comment>
<reference key="1">
    <citation type="submission" date="2008-02" db="EMBL/GenBank/DDBJ databases">
        <title>Complete sequence of Yersinia pseudotuberculosis YPIII.</title>
        <authorList>
            <consortium name="US DOE Joint Genome Institute"/>
            <person name="Copeland A."/>
            <person name="Lucas S."/>
            <person name="Lapidus A."/>
            <person name="Glavina del Rio T."/>
            <person name="Dalin E."/>
            <person name="Tice H."/>
            <person name="Bruce D."/>
            <person name="Goodwin L."/>
            <person name="Pitluck S."/>
            <person name="Munk A.C."/>
            <person name="Brettin T."/>
            <person name="Detter J.C."/>
            <person name="Han C."/>
            <person name="Tapia R."/>
            <person name="Schmutz J."/>
            <person name="Larimer F."/>
            <person name="Land M."/>
            <person name="Hauser L."/>
            <person name="Challacombe J.F."/>
            <person name="Green L."/>
            <person name="Lindler L.E."/>
            <person name="Nikolich M.P."/>
            <person name="Richardson P."/>
        </authorList>
    </citation>
    <scope>NUCLEOTIDE SEQUENCE [LARGE SCALE GENOMIC DNA]</scope>
    <source>
        <strain>YPIII</strain>
    </source>
</reference>
<gene>
    <name evidence="1" type="primary">rodZ</name>
    <name type="ordered locus">YPK_1292</name>
</gene>
<organism>
    <name type="scientific">Yersinia pseudotuberculosis serotype O:3 (strain YPIII)</name>
    <dbReference type="NCBI Taxonomy" id="502800"/>
    <lineage>
        <taxon>Bacteria</taxon>
        <taxon>Pseudomonadati</taxon>
        <taxon>Pseudomonadota</taxon>
        <taxon>Gammaproteobacteria</taxon>
        <taxon>Enterobacterales</taxon>
        <taxon>Yersiniaceae</taxon>
        <taxon>Yersinia</taxon>
    </lineage>
</organism>
<proteinExistence type="inferred from homology"/>
<keyword id="KW-0997">Cell inner membrane</keyword>
<keyword id="KW-1003">Cell membrane</keyword>
<keyword id="KW-0133">Cell shape</keyword>
<keyword id="KW-0238">DNA-binding</keyword>
<keyword id="KW-0472">Membrane</keyword>
<keyword id="KW-0735">Signal-anchor</keyword>
<keyword id="KW-0812">Transmembrane</keyword>
<keyword id="KW-1133">Transmembrane helix</keyword>
<feature type="chain" id="PRO_0000361877" description="Cytoskeleton protein RodZ">
    <location>
        <begin position="1"/>
        <end position="368"/>
    </location>
</feature>
<feature type="topological domain" description="Cytoplasmic" evidence="1">
    <location>
        <begin position="1"/>
        <end position="111"/>
    </location>
</feature>
<feature type="transmembrane region" description="Helical; Signal-anchor for type II membrane protein" evidence="1">
    <location>
        <begin position="112"/>
        <end position="132"/>
    </location>
</feature>
<feature type="topological domain" description="Periplasmic" evidence="1">
    <location>
        <begin position="133"/>
        <end position="368"/>
    </location>
</feature>
<feature type="domain" description="HTH cro/C1-type" evidence="1">
    <location>
        <begin position="19"/>
        <end position="79"/>
    </location>
</feature>
<feature type="DNA-binding region" description="H-T-H motif" evidence="1">
    <location>
        <begin position="30"/>
        <end position="49"/>
    </location>
</feature>
<feature type="region of interest" description="Disordered" evidence="2">
    <location>
        <begin position="151"/>
        <end position="243"/>
    </location>
</feature>
<feature type="compositionally biased region" description="Low complexity" evidence="2">
    <location>
        <begin position="193"/>
        <end position="221"/>
    </location>
</feature>
<feature type="compositionally biased region" description="Polar residues" evidence="2">
    <location>
        <begin position="229"/>
        <end position="243"/>
    </location>
</feature>
<protein>
    <recommendedName>
        <fullName evidence="1">Cytoskeleton protein RodZ</fullName>
    </recommendedName>
</protein>
<accession>B1JS04</accession>
<sequence length="368" mass="38811">MNTEASQDQTVTETPGVRLRQARESLGLTQQTVAERLCLKVSTIRDIEEDNAQANLASTFHRGYIRSYAKLVHLPEDELLPILEKQAPVRAAKVAPMQSFSLGKKHKKRDGWLMSFTWLIVLVVLGLTGAWWWQNHQAQQAEIANMVDQSSAQLSQNGGQPVPLTDDNSDAIAPTDAPAPVANGQPVPLTNHSTSAVTNSATTSSATTSSVPTTSSVPKTTLVPKTTLVPKTNSTEPVDTANTNTTMHQEGAASAAVSPSQVPQLGMPTDQPPLPTADAGVSGSASSVGALVMNFTADCWLQVVDATGKTLFSGIQKGGAVLNLAGKAPYKLTIGAPGALTISYQGNPVDLSKFIKANRVARLTVGVE</sequence>
<evidence type="ECO:0000255" key="1">
    <source>
        <dbReference type="HAMAP-Rule" id="MF_02017"/>
    </source>
</evidence>
<evidence type="ECO:0000256" key="2">
    <source>
        <dbReference type="SAM" id="MobiDB-lite"/>
    </source>
</evidence>
<name>RODZ_YERPY</name>